<reference key="1">
    <citation type="submission" date="2008-04" db="EMBL/GenBank/DDBJ databases">
        <title>Complete sequence of chromosome of Exiguobacterium sibiricum 255-15.</title>
        <authorList>
            <consortium name="US DOE Joint Genome Institute"/>
            <person name="Copeland A."/>
            <person name="Lucas S."/>
            <person name="Lapidus A."/>
            <person name="Glavina del Rio T."/>
            <person name="Dalin E."/>
            <person name="Tice H."/>
            <person name="Bruce D."/>
            <person name="Goodwin L."/>
            <person name="Pitluck S."/>
            <person name="Kiss H."/>
            <person name="Chertkov O."/>
            <person name="Monk C."/>
            <person name="Brettin T."/>
            <person name="Detter J.C."/>
            <person name="Han C."/>
            <person name="Kuske C.R."/>
            <person name="Schmutz J."/>
            <person name="Larimer F."/>
            <person name="Land M."/>
            <person name="Hauser L."/>
            <person name="Kyrpides N."/>
            <person name="Mikhailova N."/>
            <person name="Vishnivetskaya T."/>
            <person name="Rodrigues D.F."/>
            <person name="Gilichinsky D."/>
            <person name="Tiedje J."/>
            <person name="Richardson P."/>
        </authorList>
    </citation>
    <scope>NUCLEOTIDE SEQUENCE [LARGE SCALE GENOMIC DNA]</scope>
    <source>
        <strain>DSM 17290 / CCUG 55495 / CIP 109462 / JCM 13490 / 255-15</strain>
    </source>
</reference>
<gene>
    <name evidence="1" type="primary">pgk</name>
    <name type="ordered locus">Exig_2396</name>
</gene>
<proteinExistence type="inferred from homology"/>
<feature type="chain" id="PRO_1000096342" description="Phosphoglycerate kinase">
    <location>
        <begin position="1"/>
        <end position="394"/>
    </location>
</feature>
<feature type="binding site" evidence="1">
    <location>
        <begin position="21"/>
        <end position="23"/>
    </location>
    <ligand>
        <name>substrate</name>
    </ligand>
</feature>
<feature type="binding site" evidence="1">
    <location>
        <position position="36"/>
    </location>
    <ligand>
        <name>substrate</name>
    </ligand>
</feature>
<feature type="binding site" evidence="1">
    <location>
        <begin position="59"/>
        <end position="62"/>
    </location>
    <ligand>
        <name>substrate</name>
    </ligand>
</feature>
<feature type="binding site" evidence="1">
    <location>
        <position position="118"/>
    </location>
    <ligand>
        <name>substrate</name>
    </ligand>
</feature>
<feature type="binding site" evidence="1">
    <location>
        <position position="151"/>
    </location>
    <ligand>
        <name>substrate</name>
    </ligand>
</feature>
<feature type="binding site" evidence="1">
    <location>
        <position position="202"/>
    </location>
    <ligand>
        <name>ATP</name>
        <dbReference type="ChEBI" id="CHEBI:30616"/>
    </ligand>
</feature>
<feature type="binding site" evidence="1">
    <location>
        <position position="324"/>
    </location>
    <ligand>
        <name>ATP</name>
        <dbReference type="ChEBI" id="CHEBI:30616"/>
    </ligand>
</feature>
<feature type="binding site" evidence="1">
    <location>
        <begin position="350"/>
        <end position="353"/>
    </location>
    <ligand>
        <name>ATP</name>
        <dbReference type="ChEBI" id="CHEBI:30616"/>
    </ligand>
</feature>
<organism>
    <name type="scientific">Exiguobacterium sibiricum (strain DSM 17290 / CCUG 55495 / CIP 109462 / JCM 13490 / 255-15)</name>
    <dbReference type="NCBI Taxonomy" id="262543"/>
    <lineage>
        <taxon>Bacteria</taxon>
        <taxon>Bacillati</taxon>
        <taxon>Bacillota</taxon>
        <taxon>Bacilli</taxon>
        <taxon>Bacillales</taxon>
        <taxon>Bacillales Family XII. Incertae Sedis</taxon>
        <taxon>Exiguobacterium</taxon>
    </lineage>
</organism>
<keyword id="KW-0067">ATP-binding</keyword>
<keyword id="KW-0963">Cytoplasm</keyword>
<keyword id="KW-0324">Glycolysis</keyword>
<keyword id="KW-0418">Kinase</keyword>
<keyword id="KW-0547">Nucleotide-binding</keyword>
<keyword id="KW-1185">Reference proteome</keyword>
<keyword id="KW-0808">Transferase</keyword>
<sequence length="394" mass="42103">MNKKSIRDIDVKGKRVFTRVDFNVPLEDGKITDDTRIRAALPTIKHLVDGGAKVILASHMGRPKGEKNPEFSLAPVVARLSELLGKDIKLVEEAYGPVAEEAVSKLEEGDVIVLENVRFYPGETKNDPELAEGFAKLADVFVNDAFGAAHRAHASTEGIAHHVETAVAGLLIEKELQVLGKALSNPDRPFTAIIGGSKVADKIGVIDHLLDIVDTLIIGGGLSYTFLKAQGYEVGTSLLEVDKIEQAKEFMKKAEDKGVKFLMPVDCVITKEFGEETYVGSRDIDSIPADHMSLDIGPKTVELYAEAIKASKLVVWNGPMGVFELDKYANGTKGVAQALADSDAYSIIGGGDSAAAAEKFGLADKMSHISTGGGASLEFMEGKALPGVEALNDK</sequence>
<dbReference type="EC" id="2.7.2.3" evidence="1"/>
<dbReference type="EMBL" id="CP001022">
    <property type="protein sequence ID" value="ACB61846.1"/>
    <property type="molecule type" value="Genomic_DNA"/>
</dbReference>
<dbReference type="RefSeq" id="WP_012371262.1">
    <property type="nucleotide sequence ID" value="NC_010556.1"/>
</dbReference>
<dbReference type="SMR" id="B1YLE1"/>
<dbReference type="STRING" id="262543.Exig_2396"/>
<dbReference type="KEGG" id="esi:Exig_2396"/>
<dbReference type="eggNOG" id="COG0126">
    <property type="taxonomic scope" value="Bacteria"/>
</dbReference>
<dbReference type="HOGENOM" id="CLU_025427_0_2_9"/>
<dbReference type="OrthoDB" id="9808460at2"/>
<dbReference type="UniPathway" id="UPA00109">
    <property type="reaction ID" value="UER00185"/>
</dbReference>
<dbReference type="Proteomes" id="UP000001681">
    <property type="component" value="Chromosome"/>
</dbReference>
<dbReference type="GO" id="GO:0005829">
    <property type="term" value="C:cytosol"/>
    <property type="evidence" value="ECO:0007669"/>
    <property type="project" value="TreeGrafter"/>
</dbReference>
<dbReference type="GO" id="GO:0043531">
    <property type="term" value="F:ADP binding"/>
    <property type="evidence" value="ECO:0007669"/>
    <property type="project" value="TreeGrafter"/>
</dbReference>
<dbReference type="GO" id="GO:0005524">
    <property type="term" value="F:ATP binding"/>
    <property type="evidence" value="ECO:0007669"/>
    <property type="project" value="UniProtKB-KW"/>
</dbReference>
<dbReference type="GO" id="GO:0004618">
    <property type="term" value="F:phosphoglycerate kinase activity"/>
    <property type="evidence" value="ECO:0007669"/>
    <property type="project" value="UniProtKB-UniRule"/>
</dbReference>
<dbReference type="GO" id="GO:0006094">
    <property type="term" value="P:gluconeogenesis"/>
    <property type="evidence" value="ECO:0007669"/>
    <property type="project" value="TreeGrafter"/>
</dbReference>
<dbReference type="GO" id="GO:0006096">
    <property type="term" value="P:glycolytic process"/>
    <property type="evidence" value="ECO:0007669"/>
    <property type="project" value="UniProtKB-UniRule"/>
</dbReference>
<dbReference type="CDD" id="cd00318">
    <property type="entry name" value="Phosphoglycerate_kinase"/>
    <property type="match status" value="1"/>
</dbReference>
<dbReference type="FunFam" id="3.40.50.1260:FF:000001">
    <property type="entry name" value="Phosphoglycerate kinase"/>
    <property type="match status" value="1"/>
</dbReference>
<dbReference type="FunFam" id="3.40.50.1260:FF:000002">
    <property type="entry name" value="Phosphoglycerate kinase"/>
    <property type="match status" value="1"/>
</dbReference>
<dbReference type="Gene3D" id="3.40.50.1260">
    <property type="entry name" value="Phosphoglycerate kinase, N-terminal domain"/>
    <property type="match status" value="2"/>
</dbReference>
<dbReference type="HAMAP" id="MF_00145">
    <property type="entry name" value="Phosphoglyc_kinase"/>
    <property type="match status" value="1"/>
</dbReference>
<dbReference type="InterPro" id="IPR001576">
    <property type="entry name" value="Phosphoglycerate_kinase"/>
</dbReference>
<dbReference type="InterPro" id="IPR015824">
    <property type="entry name" value="Phosphoglycerate_kinase_N"/>
</dbReference>
<dbReference type="InterPro" id="IPR036043">
    <property type="entry name" value="Phosphoglycerate_kinase_sf"/>
</dbReference>
<dbReference type="PANTHER" id="PTHR11406">
    <property type="entry name" value="PHOSPHOGLYCERATE KINASE"/>
    <property type="match status" value="1"/>
</dbReference>
<dbReference type="PANTHER" id="PTHR11406:SF23">
    <property type="entry name" value="PHOSPHOGLYCERATE KINASE 1, CHLOROPLASTIC-RELATED"/>
    <property type="match status" value="1"/>
</dbReference>
<dbReference type="Pfam" id="PF00162">
    <property type="entry name" value="PGK"/>
    <property type="match status" value="1"/>
</dbReference>
<dbReference type="PIRSF" id="PIRSF000724">
    <property type="entry name" value="Pgk"/>
    <property type="match status" value="1"/>
</dbReference>
<dbReference type="PRINTS" id="PR00477">
    <property type="entry name" value="PHGLYCKINASE"/>
</dbReference>
<dbReference type="SUPFAM" id="SSF53748">
    <property type="entry name" value="Phosphoglycerate kinase"/>
    <property type="match status" value="1"/>
</dbReference>
<comment type="catalytic activity">
    <reaction evidence="1">
        <text>(2R)-3-phosphoglycerate + ATP = (2R)-3-phospho-glyceroyl phosphate + ADP</text>
        <dbReference type="Rhea" id="RHEA:14801"/>
        <dbReference type="ChEBI" id="CHEBI:30616"/>
        <dbReference type="ChEBI" id="CHEBI:57604"/>
        <dbReference type="ChEBI" id="CHEBI:58272"/>
        <dbReference type="ChEBI" id="CHEBI:456216"/>
        <dbReference type="EC" id="2.7.2.3"/>
    </reaction>
</comment>
<comment type="pathway">
    <text evidence="1">Carbohydrate degradation; glycolysis; pyruvate from D-glyceraldehyde 3-phosphate: step 2/5.</text>
</comment>
<comment type="subunit">
    <text evidence="1">Monomer.</text>
</comment>
<comment type="subcellular location">
    <subcellularLocation>
        <location evidence="1">Cytoplasm</location>
    </subcellularLocation>
</comment>
<comment type="similarity">
    <text evidence="1">Belongs to the phosphoglycerate kinase family.</text>
</comment>
<name>PGK_EXIS2</name>
<evidence type="ECO:0000255" key="1">
    <source>
        <dbReference type="HAMAP-Rule" id="MF_00145"/>
    </source>
</evidence>
<accession>B1YLE1</accession>
<protein>
    <recommendedName>
        <fullName evidence="1">Phosphoglycerate kinase</fullName>
        <ecNumber evidence="1">2.7.2.3</ecNumber>
    </recommendedName>
</protein>